<proteinExistence type="evidence at protein level"/>
<dbReference type="EMBL" id="AK006418">
    <property type="protein sequence ID" value="BAB24578.1"/>
    <property type="molecule type" value="mRNA"/>
</dbReference>
<dbReference type="EMBL" id="AK006646">
    <property type="protein sequence ID" value="BAB24686.1"/>
    <property type="molecule type" value="mRNA"/>
</dbReference>
<dbReference type="EMBL" id="AK018229">
    <property type="protein sequence ID" value="BAB31126.1"/>
    <property type="molecule type" value="mRNA"/>
</dbReference>
<dbReference type="EMBL" id="AK155242">
    <property type="protein sequence ID" value="BAE33143.1"/>
    <property type="molecule type" value="mRNA"/>
</dbReference>
<dbReference type="EMBL" id="AK161325">
    <property type="protein sequence ID" value="BAE36323.1"/>
    <property type="molecule type" value="mRNA"/>
</dbReference>
<dbReference type="EMBL" id="CT010168">
    <property type="protein sequence ID" value="CAJ18376.1"/>
    <property type="molecule type" value="mRNA"/>
</dbReference>
<dbReference type="EMBL" id="BC002131">
    <property type="protein sequence ID" value="AAH02131.1"/>
    <property type="molecule type" value="mRNA"/>
</dbReference>
<dbReference type="EMBL" id="BC024708">
    <property type="protein sequence ID" value="AAH24708.1"/>
    <property type="molecule type" value="mRNA"/>
</dbReference>
<dbReference type="CCDS" id="CCDS22545.1">
    <molecule id="Q9D385-1"/>
</dbReference>
<dbReference type="CCDS" id="CCDS40440.1">
    <molecule id="Q9D385-2"/>
</dbReference>
<dbReference type="RefSeq" id="NP_077153.1">
    <molecule id="Q9D385-1"/>
    <property type="nucleotide sequence ID" value="NM_024191.2"/>
</dbReference>
<dbReference type="RefSeq" id="NP_077231.1">
    <molecule id="Q9D385-2"/>
    <property type="nucleotide sequence ID" value="NM_024269.4"/>
</dbReference>
<dbReference type="SMR" id="Q9D385"/>
<dbReference type="BioGRID" id="223398">
    <property type="interactions" value="2"/>
</dbReference>
<dbReference type="FunCoup" id="Q9D385">
    <property type="interactions" value="2600"/>
</dbReference>
<dbReference type="STRING" id="10090.ENSMUSP00000034228"/>
<dbReference type="GlyGen" id="Q9D385">
    <property type="glycosylation" value="1 site"/>
</dbReference>
<dbReference type="iPTMnet" id="Q9D385"/>
<dbReference type="PhosphoSitePlus" id="Q9D385"/>
<dbReference type="SwissPalm" id="Q9D385"/>
<dbReference type="PaxDb" id="10090-ENSMUSP00000034228"/>
<dbReference type="PeptideAtlas" id="Q9D385"/>
<dbReference type="ProteomicsDB" id="296339">
    <molecule id="Q9D385-1"/>
</dbReference>
<dbReference type="ProteomicsDB" id="296340">
    <molecule id="Q9D385-2"/>
</dbReference>
<dbReference type="Pumba" id="Q9D385"/>
<dbReference type="Antibodypedia" id="28836">
    <property type="antibodies" value="328 antibodies from 25 providers"/>
</dbReference>
<dbReference type="Ensembl" id="ENSMUST00000034228.16">
    <molecule id="Q9D385-1"/>
    <property type="protein sequence ID" value="ENSMUSP00000034228.9"/>
    <property type="gene ID" value="ENSMUSG00000031776.18"/>
</dbReference>
<dbReference type="Ensembl" id="ENSMUST00000109527.6">
    <molecule id="Q9D385-2"/>
    <property type="protein sequence ID" value="ENSMUSP00000105153.5"/>
    <property type="gene ID" value="ENSMUSG00000031776.18"/>
</dbReference>
<dbReference type="GeneID" id="107566"/>
<dbReference type="KEGG" id="mmu:107566"/>
<dbReference type="UCSC" id="uc009mwt.3">
    <molecule id="Q9D385-1"/>
    <property type="organism name" value="mouse"/>
</dbReference>
<dbReference type="UCSC" id="uc009mwu.3">
    <molecule id="Q9D385-2"/>
    <property type="organism name" value="mouse"/>
</dbReference>
<dbReference type="AGR" id="MGI:1349429"/>
<dbReference type="CTD" id="23568"/>
<dbReference type="MGI" id="MGI:1349429">
    <property type="gene designation" value="Arl2bp"/>
</dbReference>
<dbReference type="VEuPathDB" id="HostDB:ENSMUSG00000031776"/>
<dbReference type="eggNOG" id="ENOG502RYJD">
    <property type="taxonomic scope" value="Eukaryota"/>
</dbReference>
<dbReference type="GeneTree" id="ENSGT00390000015052"/>
<dbReference type="HOGENOM" id="CLU_116781_0_0_1"/>
<dbReference type="InParanoid" id="Q9D385"/>
<dbReference type="OMA" id="CILEIIM"/>
<dbReference type="OrthoDB" id="302784at2759"/>
<dbReference type="PhylomeDB" id="Q9D385"/>
<dbReference type="TreeFam" id="TF315143"/>
<dbReference type="Reactome" id="R-MMU-83936">
    <property type="pathway name" value="Transport of nucleosides and free purine and pyrimidine bases across the plasma membrane"/>
</dbReference>
<dbReference type="BioGRID-ORCS" id="107566">
    <property type="hits" value="2 hits in 76 CRISPR screens"/>
</dbReference>
<dbReference type="ChiTaRS" id="Arl2bp">
    <property type="organism name" value="mouse"/>
</dbReference>
<dbReference type="PRO" id="PR:Q9D385"/>
<dbReference type="Proteomes" id="UP000000589">
    <property type="component" value="Chromosome 8"/>
</dbReference>
<dbReference type="RNAct" id="Q9D385">
    <property type="molecule type" value="protein"/>
</dbReference>
<dbReference type="Bgee" id="ENSMUSG00000031776">
    <property type="expression patterns" value="Expressed in seminiferous tubule of testis and 264 other cell types or tissues"/>
</dbReference>
<dbReference type="ExpressionAtlas" id="Q9D385">
    <property type="expression patterns" value="baseline and differential"/>
</dbReference>
<dbReference type="GO" id="GO:0005813">
    <property type="term" value="C:centrosome"/>
    <property type="evidence" value="ECO:0007669"/>
    <property type="project" value="UniProtKB-SubCell"/>
</dbReference>
<dbReference type="GO" id="GO:0036064">
    <property type="term" value="C:ciliary basal body"/>
    <property type="evidence" value="ECO:0007669"/>
    <property type="project" value="Ensembl"/>
</dbReference>
<dbReference type="GO" id="GO:0005829">
    <property type="term" value="C:cytosol"/>
    <property type="evidence" value="ECO:0007669"/>
    <property type="project" value="Ensembl"/>
</dbReference>
<dbReference type="GO" id="GO:0030496">
    <property type="term" value="C:midbody"/>
    <property type="evidence" value="ECO:0007669"/>
    <property type="project" value="Ensembl"/>
</dbReference>
<dbReference type="GO" id="GO:0005758">
    <property type="term" value="C:mitochondrial intermembrane space"/>
    <property type="evidence" value="ECO:0007669"/>
    <property type="project" value="UniProtKB-SubCell"/>
</dbReference>
<dbReference type="GO" id="GO:0005654">
    <property type="term" value="C:nucleoplasm"/>
    <property type="evidence" value="ECO:0007669"/>
    <property type="project" value="Ensembl"/>
</dbReference>
<dbReference type="GO" id="GO:0030695">
    <property type="term" value="F:GTPase regulator activity"/>
    <property type="evidence" value="ECO:0000266"/>
    <property type="project" value="MGI"/>
</dbReference>
<dbReference type="GO" id="GO:0003713">
    <property type="term" value="F:transcription coactivator activity"/>
    <property type="evidence" value="ECO:0000250"/>
    <property type="project" value="UniProtKB"/>
</dbReference>
<dbReference type="GO" id="GO:0051457">
    <property type="term" value="P:maintenance of protein location in nucleus"/>
    <property type="evidence" value="ECO:0000250"/>
    <property type="project" value="UniProtKB"/>
</dbReference>
<dbReference type="GO" id="GO:0042531">
    <property type="term" value="P:positive regulation of tyrosine phosphorylation of STAT protein"/>
    <property type="evidence" value="ECO:0000250"/>
    <property type="project" value="UniProtKB"/>
</dbReference>
<dbReference type="FunFam" id="1.20.1520.10:FF:000002">
    <property type="entry name" value="ADP-ribosylation factor-like protein 2-binding protein isoform X1"/>
    <property type="match status" value="1"/>
</dbReference>
<dbReference type="Gene3D" id="1.20.1520.10">
    <property type="entry name" value="ADP-ribosylation factor-like 2-binding protein, domain"/>
    <property type="match status" value="1"/>
</dbReference>
<dbReference type="InterPro" id="IPR038849">
    <property type="entry name" value="ARL2BP"/>
</dbReference>
<dbReference type="InterPro" id="IPR023379">
    <property type="entry name" value="BART_dom"/>
</dbReference>
<dbReference type="InterPro" id="IPR042541">
    <property type="entry name" value="BART_sf"/>
</dbReference>
<dbReference type="PANTHER" id="PTHR15487">
    <property type="entry name" value="ADP-RIBOSYLATION FACTOR-LIKE PROTEIN 2-BINDING PROTEIN"/>
    <property type="match status" value="1"/>
</dbReference>
<dbReference type="PANTHER" id="PTHR15487:SF4">
    <property type="entry name" value="ADP-RIBOSYLATION FACTOR-LIKE PROTEIN 2-BINDING PROTEIN"/>
    <property type="match status" value="1"/>
</dbReference>
<dbReference type="Pfam" id="PF11527">
    <property type="entry name" value="ARL2_Bind_BART"/>
    <property type="match status" value="1"/>
</dbReference>
<reference key="1">
    <citation type="journal article" date="2005" name="Science">
        <title>The transcriptional landscape of the mammalian genome.</title>
        <authorList>
            <person name="Carninci P."/>
            <person name="Kasukawa T."/>
            <person name="Katayama S."/>
            <person name="Gough J."/>
            <person name="Frith M.C."/>
            <person name="Maeda N."/>
            <person name="Oyama R."/>
            <person name="Ravasi T."/>
            <person name="Lenhard B."/>
            <person name="Wells C."/>
            <person name="Kodzius R."/>
            <person name="Shimokawa K."/>
            <person name="Bajic V.B."/>
            <person name="Brenner S.E."/>
            <person name="Batalov S."/>
            <person name="Forrest A.R."/>
            <person name="Zavolan M."/>
            <person name="Davis M.J."/>
            <person name="Wilming L.G."/>
            <person name="Aidinis V."/>
            <person name="Allen J.E."/>
            <person name="Ambesi-Impiombato A."/>
            <person name="Apweiler R."/>
            <person name="Aturaliya R.N."/>
            <person name="Bailey T.L."/>
            <person name="Bansal M."/>
            <person name="Baxter L."/>
            <person name="Beisel K.W."/>
            <person name="Bersano T."/>
            <person name="Bono H."/>
            <person name="Chalk A.M."/>
            <person name="Chiu K.P."/>
            <person name="Choudhary V."/>
            <person name="Christoffels A."/>
            <person name="Clutterbuck D.R."/>
            <person name="Crowe M.L."/>
            <person name="Dalla E."/>
            <person name="Dalrymple B.P."/>
            <person name="de Bono B."/>
            <person name="Della Gatta G."/>
            <person name="di Bernardo D."/>
            <person name="Down T."/>
            <person name="Engstrom P."/>
            <person name="Fagiolini M."/>
            <person name="Faulkner G."/>
            <person name="Fletcher C.F."/>
            <person name="Fukushima T."/>
            <person name="Furuno M."/>
            <person name="Futaki S."/>
            <person name="Gariboldi M."/>
            <person name="Georgii-Hemming P."/>
            <person name="Gingeras T.R."/>
            <person name="Gojobori T."/>
            <person name="Green R.E."/>
            <person name="Gustincich S."/>
            <person name="Harbers M."/>
            <person name="Hayashi Y."/>
            <person name="Hensch T.K."/>
            <person name="Hirokawa N."/>
            <person name="Hill D."/>
            <person name="Huminiecki L."/>
            <person name="Iacono M."/>
            <person name="Ikeo K."/>
            <person name="Iwama A."/>
            <person name="Ishikawa T."/>
            <person name="Jakt M."/>
            <person name="Kanapin A."/>
            <person name="Katoh M."/>
            <person name="Kawasawa Y."/>
            <person name="Kelso J."/>
            <person name="Kitamura H."/>
            <person name="Kitano H."/>
            <person name="Kollias G."/>
            <person name="Krishnan S.P."/>
            <person name="Kruger A."/>
            <person name="Kummerfeld S.K."/>
            <person name="Kurochkin I.V."/>
            <person name="Lareau L.F."/>
            <person name="Lazarevic D."/>
            <person name="Lipovich L."/>
            <person name="Liu J."/>
            <person name="Liuni S."/>
            <person name="McWilliam S."/>
            <person name="Madan Babu M."/>
            <person name="Madera M."/>
            <person name="Marchionni L."/>
            <person name="Matsuda H."/>
            <person name="Matsuzawa S."/>
            <person name="Miki H."/>
            <person name="Mignone F."/>
            <person name="Miyake S."/>
            <person name="Morris K."/>
            <person name="Mottagui-Tabar S."/>
            <person name="Mulder N."/>
            <person name="Nakano N."/>
            <person name="Nakauchi H."/>
            <person name="Ng P."/>
            <person name="Nilsson R."/>
            <person name="Nishiguchi S."/>
            <person name="Nishikawa S."/>
            <person name="Nori F."/>
            <person name="Ohara O."/>
            <person name="Okazaki Y."/>
            <person name="Orlando V."/>
            <person name="Pang K.C."/>
            <person name="Pavan W.J."/>
            <person name="Pavesi G."/>
            <person name="Pesole G."/>
            <person name="Petrovsky N."/>
            <person name="Piazza S."/>
            <person name="Reed J."/>
            <person name="Reid J.F."/>
            <person name="Ring B.Z."/>
            <person name="Ringwald M."/>
            <person name="Rost B."/>
            <person name="Ruan Y."/>
            <person name="Salzberg S.L."/>
            <person name="Sandelin A."/>
            <person name="Schneider C."/>
            <person name="Schoenbach C."/>
            <person name="Sekiguchi K."/>
            <person name="Semple C.A."/>
            <person name="Seno S."/>
            <person name="Sessa L."/>
            <person name="Sheng Y."/>
            <person name="Shibata Y."/>
            <person name="Shimada H."/>
            <person name="Shimada K."/>
            <person name="Silva D."/>
            <person name="Sinclair B."/>
            <person name="Sperling S."/>
            <person name="Stupka E."/>
            <person name="Sugiura K."/>
            <person name="Sultana R."/>
            <person name="Takenaka Y."/>
            <person name="Taki K."/>
            <person name="Tammoja K."/>
            <person name="Tan S.L."/>
            <person name="Tang S."/>
            <person name="Taylor M.S."/>
            <person name="Tegner J."/>
            <person name="Teichmann S.A."/>
            <person name="Ueda H.R."/>
            <person name="van Nimwegen E."/>
            <person name="Verardo R."/>
            <person name="Wei C.L."/>
            <person name="Yagi K."/>
            <person name="Yamanishi H."/>
            <person name="Zabarovsky E."/>
            <person name="Zhu S."/>
            <person name="Zimmer A."/>
            <person name="Hide W."/>
            <person name="Bult C."/>
            <person name="Grimmond S.M."/>
            <person name="Teasdale R.D."/>
            <person name="Liu E.T."/>
            <person name="Brusic V."/>
            <person name="Quackenbush J."/>
            <person name="Wahlestedt C."/>
            <person name="Mattick J.S."/>
            <person name="Hume D.A."/>
            <person name="Kai C."/>
            <person name="Sasaki D."/>
            <person name="Tomaru Y."/>
            <person name="Fukuda S."/>
            <person name="Kanamori-Katayama M."/>
            <person name="Suzuki M."/>
            <person name="Aoki J."/>
            <person name="Arakawa T."/>
            <person name="Iida J."/>
            <person name="Imamura K."/>
            <person name="Itoh M."/>
            <person name="Kato T."/>
            <person name="Kawaji H."/>
            <person name="Kawagashira N."/>
            <person name="Kawashima T."/>
            <person name="Kojima M."/>
            <person name="Kondo S."/>
            <person name="Konno H."/>
            <person name="Nakano K."/>
            <person name="Ninomiya N."/>
            <person name="Nishio T."/>
            <person name="Okada M."/>
            <person name="Plessy C."/>
            <person name="Shibata K."/>
            <person name="Shiraki T."/>
            <person name="Suzuki S."/>
            <person name="Tagami M."/>
            <person name="Waki K."/>
            <person name="Watahiki A."/>
            <person name="Okamura-Oho Y."/>
            <person name="Suzuki H."/>
            <person name="Kawai J."/>
            <person name="Hayashizaki Y."/>
        </authorList>
    </citation>
    <scope>NUCLEOTIDE SEQUENCE [LARGE SCALE MRNA] (ISOFORMS 1 AND 2)</scope>
    <source>
        <strain>C57BL/6J</strain>
        <strain>NOD</strain>
        <tissue>Medulla oblongata</tissue>
        <tissue>Testis</tissue>
    </source>
</reference>
<reference key="2">
    <citation type="submission" date="2005-07" db="EMBL/GenBank/DDBJ databases">
        <title>Cloning of mouse full open reading frames in Gateway(R) system entry vector (pDONR201).</title>
        <authorList>
            <person name="Ebert L."/>
            <person name="Muenstermann E."/>
            <person name="Schatten R."/>
            <person name="Henze S."/>
            <person name="Bohn E."/>
            <person name="Mollenhauer J."/>
            <person name="Wiemann S."/>
            <person name="Schick M."/>
            <person name="Korn B."/>
        </authorList>
    </citation>
    <scope>NUCLEOTIDE SEQUENCE [LARGE SCALE MRNA] (ISOFORM 1)</scope>
</reference>
<reference key="3">
    <citation type="journal article" date="2004" name="Genome Res.">
        <title>The status, quality, and expansion of the NIH full-length cDNA project: the Mammalian Gene Collection (MGC).</title>
        <authorList>
            <consortium name="The MGC Project Team"/>
        </authorList>
    </citation>
    <scope>NUCLEOTIDE SEQUENCE [LARGE SCALE MRNA] (ISOFORM 1)</scope>
    <source>
        <strain>FVB/N</strain>
        <tissue>Mammary tumor</tissue>
    </source>
</reference>
<reference key="4">
    <citation type="journal article" date="1999" name="J. Biol. Chem.">
        <title>The ARF-like 2 (ARL2)-binding protein, BART. Purification, cloning, and initial characterization.</title>
        <authorList>
            <person name="Sharer J.D."/>
            <person name="Kahn R.A."/>
        </authorList>
    </citation>
    <scope>IDENTIFICATION</scope>
    <scope>TISSUE SPECIFICITY</scope>
</reference>
<reference key="5">
    <citation type="journal article" date="2002" name="Mol. Biol. Cell">
        <title>ARL2 and BART enter mitochondria and bind the adenine nucleotide transporter.</title>
        <authorList>
            <person name="Sharer J.D."/>
            <person name="Shern J.F."/>
            <person name="Van Valkenburgh H."/>
            <person name="Wallace D.C."/>
            <person name="Kahn R.A."/>
        </authorList>
    </citation>
    <scope>IDENTIFICATION IN A COMPLEX WITH ARL2 AND SLC25A4</scope>
    <scope>INTERACTION WITH ARL2</scope>
    <scope>TISSUE SPECIFICITY</scope>
</reference>
<reference key="6">
    <citation type="journal article" date="2008" name="Int. Immunol.">
        <title>BART is essential for nuclear retention of STAT3.</title>
        <authorList>
            <person name="Muromoto R."/>
            <person name="Sekine Y."/>
            <person name="Imoto S."/>
            <person name="Ikeda O."/>
            <person name="Okayama T."/>
            <person name="Sato N."/>
            <person name="Matsuda T."/>
        </authorList>
    </citation>
    <scope>INTERACTION WITH STAT2; STAT3 AND STAT4</scope>
    <scope>TISSUE SPECIFICITY</scope>
</reference>
<reference key="7">
    <citation type="journal article" date="2010" name="Cell">
        <title>A tissue-specific atlas of mouse protein phosphorylation and expression.</title>
        <authorList>
            <person name="Huttlin E.L."/>
            <person name="Jedrychowski M.P."/>
            <person name="Elias J.E."/>
            <person name="Goswami T."/>
            <person name="Rad R."/>
            <person name="Beausoleil S.A."/>
            <person name="Villen J."/>
            <person name="Haas W."/>
            <person name="Sowa M.E."/>
            <person name="Gygi S.P."/>
        </authorList>
    </citation>
    <scope>IDENTIFICATION BY MASS SPECTROMETRY [LARGE SCALE ANALYSIS]</scope>
    <source>
        <tissue>Brain</tissue>
        <tissue>Heart</tissue>
        <tissue>Kidney</tissue>
        <tissue>Lung</tissue>
        <tissue>Spleen</tissue>
        <tissue>Testis</tissue>
    </source>
</reference>
<reference key="8">
    <citation type="journal article" date="2013" name="Am. J. Hum. Genet.">
        <title>Mutations in ARL2BP, encoding ADP-ribosylation-factor-like 2 binding protein, cause autosomal-recessive retinitis pigmentosa.</title>
        <authorList>
            <person name="Davidson A.E."/>
            <person name="Schwarz N."/>
            <person name="Zelinger L."/>
            <person name="Stern-Schneider G."/>
            <person name="Shoemark A."/>
            <person name="Spitzbarth B."/>
            <person name="Gross M."/>
            <person name="Laxer U."/>
            <person name="Sosna J."/>
            <person name="Sergouniotis P.I."/>
            <person name="Waseem N.H."/>
            <person name="Wilson R."/>
            <person name="Kahn R.A."/>
            <person name="Plagnol V."/>
            <person name="Wolfrum U."/>
            <person name="Banin E."/>
            <person name="Hardcastle A.J."/>
            <person name="Cheetham M.E."/>
            <person name="Sharon D."/>
            <person name="Webster A.R."/>
        </authorList>
    </citation>
    <scope>SUBCELLULAR LOCATION</scope>
    <scope>TISSUE SPECIFICITY</scope>
</reference>
<organism>
    <name type="scientific">Mus musculus</name>
    <name type="common">Mouse</name>
    <dbReference type="NCBI Taxonomy" id="10090"/>
    <lineage>
        <taxon>Eukaryota</taxon>
        <taxon>Metazoa</taxon>
        <taxon>Chordata</taxon>
        <taxon>Craniata</taxon>
        <taxon>Vertebrata</taxon>
        <taxon>Euteleostomi</taxon>
        <taxon>Mammalia</taxon>
        <taxon>Eutheria</taxon>
        <taxon>Euarchontoglires</taxon>
        <taxon>Glires</taxon>
        <taxon>Rodentia</taxon>
        <taxon>Myomorpha</taxon>
        <taxon>Muroidea</taxon>
        <taxon>Muridae</taxon>
        <taxon>Murinae</taxon>
        <taxon>Mus</taxon>
        <taxon>Mus</taxon>
    </lineage>
</organism>
<protein>
    <recommendedName>
        <fullName>ADP-ribosylation factor-like protein 2-binding protein</fullName>
        <shortName>ARF-like 2-binding protein</shortName>
    </recommendedName>
    <alternativeName>
        <fullName>Binder of ARF2 protein 1</fullName>
    </alternativeName>
</protein>
<evidence type="ECO:0000250" key="1"/>
<evidence type="ECO:0000269" key="2">
    <source>
    </source>
</evidence>
<evidence type="ECO:0000269" key="3">
    <source>
    </source>
</evidence>
<evidence type="ECO:0000269" key="4">
    <source>
    </source>
</evidence>
<evidence type="ECO:0000269" key="5">
    <source>
    </source>
</evidence>
<evidence type="ECO:0000303" key="6">
    <source>
    </source>
</evidence>
<evidence type="ECO:0000305" key="7"/>
<accession>Q9D385</accession>
<accession>Q9CQW6</accession>
<sequence length="163" mass="18754">MDALEEESFALSFSSASDAEFDAVVGCLEDIIMDDEFQLLQRNFMDKYYQEFEDTEENKLTYTPIFNEYISLVEKYIEEQLLERIPGFNMAAFTTTLQHHKDEVAGDIFDMLLTFTDFLAFKEMFLDYRAEKEGRGLDLSSGLVVTSLCKSSSTPASQNNLRH</sequence>
<name>AR2BP_MOUSE</name>
<gene>
    <name type="primary">Arl2bp</name>
    <name type="synonym">Bart</name>
    <name type="synonym">Bart1</name>
</gene>
<comment type="function">
    <text evidence="1">Together with ARL2, plays a role in the nuclear translocation, retention and transcriptional activity of STAT3. May play a role as an effector of ARL2 (By similarity).</text>
</comment>
<comment type="subunit">
    <text evidence="1 3 4">Interacts with GTP bound ARL2 and ARL3; the complex ARL2-ARL2BP as well as ARL2BP alone, binds to SLC25A4/ANT1. Interaction with ARL2 may be required for targeting to cilia basal body (By similarity). Interacts with STAT3; interaction is enhanced with ARL2. Found in a complex with ARL2BP, ARL2 and SLC25A6 (By similarity). Found in a complex with ARL2, ARL2BP and SLC25A4. Interacts with STAT2, STAT3 and STAT4.</text>
</comment>
<comment type="subcellular location">
    <subcellularLocation>
        <location evidence="5">Cytoplasm</location>
    </subcellularLocation>
    <subcellularLocation>
        <location evidence="5">Mitochondrion intermembrane space</location>
    </subcellularLocation>
    <subcellularLocation>
        <location evidence="1">Cytoplasm</location>
        <location evidence="1">Cytoskeleton</location>
        <location evidence="1">Microtubule organizing center</location>
        <location evidence="1">Centrosome</location>
    </subcellularLocation>
    <subcellularLocation>
        <location evidence="1">Nucleus</location>
    </subcellularLocation>
    <subcellularLocation>
        <location evidence="5">Cytoplasm</location>
        <location evidence="5">Cytoskeleton</location>
        <location evidence="5">Cilium basal body</location>
    </subcellularLocation>
    <text evidence="1">Detected in the midbody matrix. Not detected in the Golgi, nucleus and on the mitotic spindle. Centrosome-associated throughout the cell cycle. Not detected to interphase microtubules (By similarity). The complex formed with ARL2BP, ARL2 and SLC25A4 is expressed in mitochondria. In retina photoreceptor cells, localized in the distal connecting cilia, basal body, ciliary-associated centriole, and ciliary rootlet. Interaction with ARL2 may be required for cilia basal body localization (By similarity).</text>
</comment>
<comment type="alternative products">
    <event type="alternative splicing"/>
    <isoform>
        <id>Q9D385-1</id>
        <name>1</name>
        <sequence type="displayed"/>
    </isoform>
    <isoform>
        <id>Q9D385-2</id>
        <name>2</name>
        <sequence type="described" ref="VSP_025320 VSP_025319"/>
    </isoform>
</comment>
<comment type="tissue specificity">
    <text evidence="2 3 4 5">Widely expressed, with most abundant activity in brain, especially in hippocampus and cortex. Also expressed in lung, cerebellum, liver, kidney, retina, spleen, muscle and heart (at protein level).</text>
</comment>
<comment type="similarity">
    <text evidence="7">Belongs to the ARL2BP family.</text>
</comment>
<keyword id="KW-0025">Alternative splicing</keyword>
<keyword id="KW-0966">Cell projection</keyword>
<keyword id="KW-0969">Cilium</keyword>
<keyword id="KW-0963">Cytoplasm</keyword>
<keyword id="KW-0206">Cytoskeleton</keyword>
<keyword id="KW-0496">Mitochondrion</keyword>
<keyword id="KW-0539">Nucleus</keyword>
<keyword id="KW-1185">Reference proteome</keyword>
<feature type="chain" id="PRO_0000287115" description="ADP-ribosylation factor-like protein 2-binding protein">
    <location>
        <begin position="1"/>
        <end position="163"/>
    </location>
</feature>
<feature type="splice variant" id="VSP_025320" description="In isoform 2." evidence="6">
    <location>
        <begin position="1"/>
        <end position="11"/>
    </location>
</feature>
<feature type="splice variant" id="VSP_025319" description="In isoform 2." evidence="6">
    <original>SF</original>
    <variation>MR</variation>
    <location>
        <begin position="12"/>
        <end position="13"/>
    </location>
</feature>